<gene>
    <name type="ORF">SPAC926.06c</name>
</gene>
<evidence type="ECO:0000256" key="1">
    <source>
        <dbReference type="SAM" id="MobiDB-lite"/>
    </source>
</evidence>
<evidence type="ECO:0000269" key="2">
    <source>
    </source>
</evidence>
<evidence type="ECO:0000269" key="3">
    <source>
    </source>
</evidence>
<evidence type="ECO:0000305" key="4"/>
<evidence type="ECO:0000312" key="5">
    <source>
        <dbReference type="EMBL" id="CAB54154.1"/>
    </source>
</evidence>
<name>YFT6_SCHPO</name>
<organism>
    <name type="scientific">Schizosaccharomyces pombe (strain 972 / ATCC 24843)</name>
    <name type="common">Fission yeast</name>
    <dbReference type="NCBI Taxonomy" id="284812"/>
    <lineage>
        <taxon>Eukaryota</taxon>
        <taxon>Fungi</taxon>
        <taxon>Dikarya</taxon>
        <taxon>Ascomycota</taxon>
        <taxon>Taphrinomycotina</taxon>
        <taxon>Schizosaccharomycetes</taxon>
        <taxon>Schizosaccharomycetales</taxon>
        <taxon>Schizosaccharomycetaceae</taxon>
        <taxon>Schizosaccharomyces</taxon>
    </lineage>
</organism>
<proteinExistence type="evidence at protein level"/>
<feature type="chain" id="PRO_0000312229" description="Uncharacterized leucine-rich repeat-containing protein C926.06c">
    <location>
        <begin position="1"/>
        <end position="621"/>
    </location>
</feature>
<feature type="repeat" description="LRR 1">
    <location>
        <begin position="333"/>
        <end position="354"/>
    </location>
</feature>
<feature type="repeat" description="LRR 2">
    <location>
        <begin position="357"/>
        <end position="379"/>
    </location>
</feature>
<feature type="repeat" description="LRR 3">
    <location>
        <begin position="380"/>
        <end position="401"/>
    </location>
</feature>
<feature type="repeat" description="LRR 4">
    <location>
        <begin position="404"/>
        <end position="425"/>
    </location>
</feature>
<feature type="repeat" description="LRR 5">
    <location>
        <begin position="426"/>
        <end position="447"/>
    </location>
</feature>
<feature type="repeat" description="LRR 6">
    <location>
        <begin position="451"/>
        <end position="472"/>
    </location>
</feature>
<feature type="region of interest" description="Disordered" evidence="1">
    <location>
        <begin position="552"/>
        <end position="581"/>
    </location>
</feature>
<feature type="modified residue" description="Phosphoserine" evidence="3">
    <location>
        <position position="269"/>
    </location>
</feature>
<feature type="modified residue" description="Phosphoserine" evidence="3">
    <location>
        <position position="271"/>
    </location>
</feature>
<feature type="modified residue" description="Phosphoserine" evidence="3">
    <location>
        <position position="274"/>
    </location>
</feature>
<feature type="modified residue" description="Phosphoserine" evidence="3">
    <location>
        <position position="290"/>
    </location>
</feature>
<feature type="modified residue" description="Phosphoserine" evidence="3">
    <location>
        <position position="292"/>
    </location>
</feature>
<dbReference type="EMBL" id="CU329670">
    <property type="protein sequence ID" value="CAB54154.1"/>
    <property type="molecule type" value="Genomic_DNA"/>
</dbReference>
<dbReference type="PIR" id="T39204">
    <property type="entry name" value="T39204"/>
</dbReference>
<dbReference type="RefSeq" id="NP_594367.1">
    <property type="nucleotide sequence ID" value="NM_001019788.2"/>
</dbReference>
<dbReference type="SMR" id="Q9UUG2"/>
<dbReference type="BioGRID" id="279949">
    <property type="interactions" value="18"/>
</dbReference>
<dbReference type="FunCoup" id="Q9UUG2">
    <property type="interactions" value="420"/>
</dbReference>
<dbReference type="STRING" id="284812.Q9UUG2"/>
<dbReference type="iPTMnet" id="Q9UUG2"/>
<dbReference type="PaxDb" id="4896-SPAC926.06c.1"/>
<dbReference type="EnsemblFungi" id="SPAC926.06c.1">
    <property type="protein sequence ID" value="SPAC926.06c.1:pep"/>
    <property type="gene ID" value="SPAC926.06c"/>
</dbReference>
<dbReference type="KEGG" id="spo:2543531"/>
<dbReference type="PomBase" id="SPAC926.06c"/>
<dbReference type="VEuPathDB" id="FungiDB:SPAC926.06c"/>
<dbReference type="eggNOG" id="ENOG502QTY2">
    <property type="taxonomic scope" value="Eukaryota"/>
</dbReference>
<dbReference type="HOGENOM" id="CLU_009538_0_0_1"/>
<dbReference type="InParanoid" id="Q9UUG2"/>
<dbReference type="OMA" id="RQDFGNT"/>
<dbReference type="PhylomeDB" id="Q9UUG2"/>
<dbReference type="PRO" id="PR:Q9UUG2"/>
<dbReference type="Proteomes" id="UP000002485">
    <property type="component" value="Chromosome I"/>
</dbReference>
<dbReference type="GO" id="GO:0005737">
    <property type="term" value="C:cytoplasm"/>
    <property type="evidence" value="ECO:0000318"/>
    <property type="project" value="GO_Central"/>
</dbReference>
<dbReference type="GO" id="GO:0005829">
    <property type="term" value="C:cytosol"/>
    <property type="evidence" value="ECO:0007005"/>
    <property type="project" value="PomBase"/>
</dbReference>
<dbReference type="GO" id="GO:0005634">
    <property type="term" value="C:nucleus"/>
    <property type="evidence" value="ECO:0007005"/>
    <property type="project" value="PomBase"/>
</dbReference>
<dbReference type="GO" id="GO:0005774">
    <property type="term" value="C:vacuolar membrane"/>
    <property type="evidence" value="ECO:0007669"/>
    <property type="project" value="UniProtKB-SubCell"/>
</dbReference>
<dbReference type="Gene3D" id="3.80.10.10">
    <property type="entry name" value="Ribonuclease Inhibitor"/>
    <property type="match status" value="2"/>
</dbReference>
<dbReference type="InterPro" id="IPR001611">
    <property type="entry name" value="Leu-rich_rpt"/>
</dbReference>
<dbReference type="InterPro" id="IPR025875">
    <property type="entry name" value="Leu-rich_rpt_4"/>
</dbReference>
<dbReference type="InterPro" id="IPR003591">
    <property type="entry name" value="Leu-rich_rpt_typical-subtyp"/>
</dbReference>
<dbReference type="InterPro" id="IPR032675">
    <property type="entry name" value="LRR_dom_sf"/>
</dbReference>
<dbReference type="PANTHER" id="PTHR15454">
    <property type="entry name" value="NISCHARIN RELATED"/>
    <property type="match status" value="1"/>
</dbReference>
<dbReference type="PANTHER" id="PTHR15454:SF69">
    <property type="entry name" value="SERINE_THREONINE-PROTEIN KINASE 11-INTERACTING PROTEIN"/>
    <property type="match status" value="1"/>
</dbReference>
<dbReference type="Pfam" id="PF12799">
    <property type="entry name" value="LRR_4"/>
    <property type="match status" value="1"/>
</dbReference>
<dbReference type="Pfam" id="PF13855">
    <property type="entry name" value="LRR_8"/>
    <property type="match status" value="1"/>
</dbReference>
<dbReference type="SMART" id="SM00364">
    <property type="entry name" value="LRR_BAC"/>
    <property type="match status" value="3"/>
</dbReference>
<dbReference type="SMART" id="SM00369">
    <property type="entry name" value="LRR_TYP"/>
    <property type="match status" value="2"/>
</dbReference>
<dbReference type="SUPFAM" id="SSF52058">
    <property type="entry name" value="L domain-like"/>
    <property type="match status" value="1"/>
</dbReference>
<dbReference type="PROSITE" id="PS51450">
    <property type="entry name" value="LRR"/>
    <property type="match status" value="7"/>
</dbReference>
<comment type="subcellular location">
    <subcellularLocation>
        <location evidence="2">Cytoplasm</location>
    </subcellularLocation>
    <subcellularLocation>
        <location evidence="2">Nucleus</location>
    </subcellularLocation>
    <subcellularLocation>
        <location evidence="2">Vacuole membrane</location>
    </subcellularLocation>
</comment>
<accession>Q9UUG2</accession>
<protein>
    <recommendedName>
        <fullName>Uncharacterized leucine-rich repeat-containing protein C926.06c</fullName>
    </recommendedName>
</protein>
<keyword id="KW-0963">Cytoplasm</keyword>
<keyword id="KW-0433">Leucine-rich repeat</keyword>
<keyword id="KW-0472">Membrane</keyword>
<keyword id="KW-0539">Nucleus</keyword>
<keyword id="KW-0597">Phosphoprotein</keyword>
<keyword id="KW-1185">Reference proteome</keyword>
<keyword id="KW-0677">Repeat</keyword>
<keyword id="KW-0926">Vacuole</keyword>
<sequence length="621" mass="69485">MGSTVDGEKYIRNLASYIRSHEKRFARAPYRAPNHSIFSDRPVQLQLTVHHLYYLLTKFEELGVNTGPLNIRIENLHSETFPSDYTSFLNQSPKKNDFDDNMSLNSIVTMGSILSNVSSVWSIFSTAPSEASETRNKQRILAILRYIYSCFTKLPAISLVYNPKTPLISQYEEFPLDTAVPITVFKNLSSLEIRGYDIRSIFGWDFLSTTLKSLILHHCDLADLSEVLIKLVLDDAELYRFRSSRQTYPQQPNSQPCEQHPAHANLRRSVSLGSKDYLKSSHPPVHKTLSQSVLVLSKDGNASSSGGTENQSANSSSSLMEKDAILSSSSWSQLLYLRCSSCKLKSIPKNVFLSLQSLVSLDLSGNELTEIPYALGELPQLCSLNLASNKITGCRTFYHISLSHLQILVLSRNHLTSLSGLENVPSLEKLDIRDNSITDVVEFRRLVGNTNFEEAYLSLNPFTKTYSSYRITIFNYFREYPGSKDIMLDGRGPGMLEKMYLSEKASAPERVISLNPVNQKSHSPAIKSSSTLRKASKTRIVDLSAPNSAVFSKNASGGDTSSNVSLLNGSASEEIPQNTESGQVFRKKIEMLRQEAGPEWVDALMKESVVKHKFRNKDESV</sequence>
<reference evidence="5" key="1">
    <citation type="journal article" date="2002" name="Nature">
        <title>The genome sequence of Schizosaccharomyces pombe.</title>
        <authorList>
            <person name="Wood V."/>
            <person name="Gwilliam R."/>
            <person name="Rajandream M.A."/>
            <person name="Lyne M.H."/>
            <person name="Lyne R."/>
            <person name="Stewart A."/>
            <person name="Sgouros J.G."/>
            <person name="Peat N."/>
            <person name="Hayles J."/>
            <person name="Baker S.G."/>
            <person name="Basham D."/>
            <person name="Bowman S."/>
            <person name="Brooks K."/>
            <person name="Brown D."/>
            <person name="Brown S."/>
            <person name="Chillingworth T."/>
            <person name="Churcher C.M."/>
            <person name="Collins M."/>
            <person name="Connor R."/>
            <person name="Cronin A."/>
            <person name="Davis P."/>
            <person name="Feltwell T."/>
            <person name="Fraser A."/>
            <person name="Gentles S."/>
            <person name="Goble A."/>
            <person name="Hamlin N."/>
            <person name="Harris D.E."/>
            <person name="Hidalgo J."/>
            <person name="Hodgson G."/>
            <person name="Holroyd S."/>
            <person name="Hornsby T."/>
            <person name="Howarth S."/>
            <person name="Huckle E.J."/>
            <person name="Hunt S."/>
            <person name="Jagels K."/>
            <person name="James K.D."/>
            <person name="Jones L."/>
            <person name="Jones M."/>
            <person name="Leather S."/>
            <person name="McDonald S."/>
            <person name="McLean J."/>
            <person name="Mooney P."/>
            <person name="Moule S."/>
            <person name="Mungall K.L."/>
            <person name="Murphy L.D."/>
            <person name="Niblett D."/>
            <person name="Odell C."/>
            <person name="Oliver K."/>
            <person name="O'Neil S."/>
            <person name="Pearson D."/>
            <person name="Quail M.A."/>
            <person name="Rabbinowitsch E."/>
            <person name="Rutherford K.M."/>
            <person name="Rutter S."/>
            <person name="Saunders D."/>
            <person name="Seeger K."/>
            <person name="Sharp S."/>
            <person name="Skelton J."/>
            <person name="Simmonds M.N."/>
            <person name="Squares R."/>
            <person name="Squares S."/>
            <person name="Stevens K."/>
            <person name="Taylor K."/>
            <person name="Taylor R.G."/>
            <person name="Tivey A."/>
            <person name="Walsh S.V."/>
            <person name="Warren T."/>
            <person name="Whitehead S."/>
            <person name="Woodward J.R."/>
            <person name="Volckaert G."/>
            <person name="Aert R."/>
            <person name="Robben J."/>
            <person name="Grymonprez B."/>
            <person name="Weltjens I."/>
            <person name="Vanstreels E."/>
            <person name="Rieger M."/>
            <person name="Schaefer M."/>
            <person name="Mueller-Auer S."/>
            <person name="Gabel C."/>
            <person name="Fuchs M."/>
            <person name="Duesterhoeft A."/>
            <person name="Fritzc C."/>
            <person name="Holzer E."/>
            <person name="Moestl D."/>
            <person name="Hilbert H."/>
            <person name="Borzym K."/>
            <person name="Langer I."/>
            <person name="Beck A."/>
            <person name="Lehrach H."/>
            <person name="Reinhardt R."/>
            <person name="Pohl T.M."/>
            <person name="Eger P."/>
            <person name="Zimmermann W."/>
            <person name="Wedler H."/>
            <person name="Wambutt R."/>
            <person name="Purnelle B."/>
            <person name="Goffeau A."/>
            <person name="Cadieu E."/>
            <person name="Dreano S."/>
            <person name="Gloux S."/>
            <person name="Lelaure V."/>
            <person name="Mottier S."/>
            <person name="Galibert F."/>
            <person name="Aves S.J."/>
            <person name="Xiang Z."/>
            <person name="Hunt C."/>
            <person name="Moore K."/>
            <person name="Hurst S.M."/>
            <person name="Lucas M."/>
            <person name="Rochet M."/>
            <person name="Gaillardin C."/>
            <person name="Tallada V.A."/>
            <person name="Garzon A."/>
            <person name="Thode G."/>
            <person name="Daga R.R."/>
            <person name="Cruzado L."/>
            <person name="Jimenez J."/>
            <person name="Sanchez M."/>
            <person name="del Rey F."/>
            <person name="Benito J."/>
            <person name="Dominguez A."/>
            <person name="Revuelta J.L."/>
            <person name="Moreno S."/>
            <person name="Armstrong J."/>
            <person name="Forsburg S.L."/>
            <person name="Cerutti L."/>
            <person name="Lowe T."/>
            <person name="McCombie W.R."/>
            <person name="Paulsen I."/>
            <person name="Potashkin J."/>
            <person name="Shpakovski G.V."/>
            <person name="Ussery D."/>
            <person name="Barrell B.G."/>
            <person name="Nurse P."/>
        </authorList>
    </citation>
    <scope>NUCLEOTIDE SEQUENCE [LARGE SCALE GENOMIC DNA]</scope>
    <source>
        <strain>972 / ATCC 24843</strain>
    </source>
</reference>
<reference evidence="4" key="2">
    <citation type="journal article" date="2006" name="Nat. Biotechnol.">
        <title>ORFeome cloning and global analysis of protein localization in the fission yeast Schizosaccharomyces pombe.</title>
        <authorList>
            <person name="Matsuyama A."/>
            <person name="Arai R."/>
            <person name="Yashiroda Y."/>
            <person name="Shirai A."/>
            <person name="Kamata A."/>
            <person name="Sekido S."/>
            <person name="Kobayashi Y."/>
            <person name="Hashimoto A."/>
            <person name="Hamamoto M."/>
            <person name="Hiraoka Y."/>
            <person name="Horinouchi S."/>
            <person name="Yoshida M."/>
        </authorList>
    </citation>
    <scope>SUBCELLULAR LOCATION [LARGE SCALE ANALYSIS]</scope>
</reference>
<reference key="3">
    <citation type="journal article" date="2008" name="J. Proteome Res.">
        <title>Phosphoproteome analysis of fission yeast.</title>
        <authorList>
            <person name="Wilson-Grady J.T."/>
            <person name="Villen J."/>
            <person name="Gygi S.P."/>
        </authorList>
    </citation>
    <scope>PHOSPHORYLATION [LARGE SCALE ANALYSIS] AT SER-269; SER-271; SER-274; SER-290 AND SER-292</scope>
    <scope>IDENTIFICATION BY MASS SPECTROMETRY</scope>
</reference>